<accession>Q9CEW2</accession>
<feature type="chain" id="PRO_0000102965" description="SsrA-binding protein">
    <location>
        <begin position="1"/>
        <end position="155"/>
    </location>
</feature>
<evidence type="ECO:0000255" key="1">
    <source>
        <dbReference type="HAMAP-Rule" id="MF_00023"/>
    </source>
</evidence>
<dbReference type="EMBL" id="AE005176">
    <property type="protein sequence ID" value="AAK05820.1"/>
    <property type="molecule type" value="Genomic_DNA"/>
</dbReference>
<dbReference type="PIR" id="B86840">
    <property type="entry name" value="B86840"/>
</dbReference>
<dbReference type="RefSeq" id="NP_267878.1">
    <property type="nucleotide sequence ID" value="NC_002662.1"/>
</dbReference>
<dbReference type="RefSeq" id="WP_003130878.1">
    <property type="nucleotide sequence ID" value="NC_002662.1"/>
</dbReference>
<dbReference type="SMR" id="Q9CEW2"/>
<dbReference type="PaxDb" id="272623-L160560"/>
<dbReference type="EnsemblBacteria" id="AAK05820">
    <property type="protein sequence ID" value="AAK05820"/>
    <property type="gene ID" value="L160560"/>
</dbReference>
<dbReference type="GeneID" id="89633923"/>
<dbReference type="KEGG" id="lla:L160560"/>
<dbReference type="PATRIC" id="fig|272623.7.peg.1847"/>
<dbReference type="eggNOG" id="COG0691">
    <property type="taxonomic scope" value="Bacteria"/>
</dbReference>
<dbReference type="HOGENOM" id="CLU_108953_0_1_9"/>
<dbReference type="OrthoDB" id="9805462at2"/>
<dbReference type="Proteomes" id="UP000002196">
    <property type="component" value="Chromosome"/>
</dbReference>
<dbReference type="GO" id="GO:0005829">
    <property type="term" value="C:cytosol"/>
    <property type="evidence" value="ECO:0007669"/>
    <property type="project" value="TreeGrafter"/>
</dbReference>
<dbReference type="GO" id="GO:0003723">
    <property type="term" value="F:RNA binding"/>
    <property type="evidence" value="ECO:0007669"/>
    <property type="project" value="UniProtKB-UniRule"/>
</dbReference>
<dbReference type="GO" id="GO:0070929">
    <property type="term" value="P:trans-translation"/>
    <property type="evidence" value="ECO:0007669"/>
    <property type="project" value="UniProtKB-UniRule"/>
</dbReference>
<dbReference type="CDD" id="cd09294">
    <property type="entry name" value="SmpB"/>
    <property type="match status" value="1"/>
</dbReference>
<dbReference type="Gene3D" id="2.40.280.10">
    <property type="match status" value="1"/>
</dbReference>
<dbReference type="HAMAP" id="MF_00023">
    <property type="entry name" value="SmpB"/>
    <property type="match status" value="1"/>
</dbReference>
<dbReference type="InterPro" id="IPR023620">
    <property type="entry name" value="SmpB"/>
</dbReference>
<dbReference type="InterPro" id="IPR000037">
    <property type="entry name" value="SsrA-bd_prot"/>
</dbReference>
<dbReference type="InterPro" id="IPR020081">
    <property type="entry name" value="SsrA-bd_prot_CS"/>
</dbReference>
<dbReference type="NCBIfam" id="NF003843">
    <property type="entry name" value="PRK05422.1"/>
    <property type="match status" value="1"/>
</dbReference>
<dbReference type="NCBIfam" id="TIGR00086">
    <property type="entry name" value="smpB"/>
    <property type="match status" value="1"/>
</dbReference>
<dbReference type="PANTHER" id="PTHR30308:SF2">
    <property type="entry name" value="SSRA-BINDING PROTEIN"/>
    <property type="match status" value="1"/>
</dbReference>
<dbReference type="PANTHER" id="PTHR30308">
    <property type="entry name" value="TMRNA-BINDING COMPONENT OF TRANS-TRANSLATION TAGGING COMPLEX"/>
    <property type="match status" value="1"/>
</dbReference>
<dbReference type="Pfam" id="PF01668">
    <property type="entry name" value="SmpB"/>
    <property type="match status" value="1"/>
</dbReference>
<dbReference type="SUPFAM" id="SSF74982">
    <property type="entry name" value="Small protein B (SmpB)"/>
    <property type="match status" value="1"/>
</dbReference>
<dbReference type="PROSITE" id="PS01317">
    <property type="entry name" value="SSRP"/>
    <property type="match status" value="1"/>
</dbReference>
<reference key="1">
    <citation type="journal article" date="2001" name="Genome Res.">
        <title>The complete genome sequence of the lactic acid bacterium Lactococcus lactis ssp. lactis IL1403.</title>
        <authorList>
            <person name="Bolotin A."/>
            <person name="Wincker P."/>
            <person name="Mauger S."/>
            <person name="Jaillon O."/>
            <person name="Malarme K."/>
            <person name="Weissenbach J."/>
            <person name="Ehrlich S.D."/>
            <person name="Sorokin A."/>
        </authorList>
    </citation>
    <scope>NUCLEOTIDE SEQUENCE [LARGE SCALE GENOMIC DNA]</scope>
    <source>
        <strain>IL1403</strain>
    </source>
</reference>
<gene>
    <name evidence="1" type="primary">smpB</name>
    <name type="ordered locus">LL1722</name>
    <name type="ORF">L160560</name>
</gene>
<protein>
    <recommendedName>
        <fullName evidence="1">SsrA-binding protein</fullName>
    </recommendedName>
    <alternativeName>
        <fullName evidence="1">Small protein B</fullName>
    </alternativeName>
</protein>
<organism>
    <name type="scientific">Lactococcus lactis subsp. lactis (strain IL1403)</name>
    <name type="common">Streptococcus lactis</name>
    <dbReference type="NCBI Taxonomy" id="272623"/>
    <lineage>
        <taxon>Bacteria</taxon>
        <taxon>Bacillati</taxon>
        <taxon>Bacillota</taxon>
        <taxon>Bacilli</taxon>
        <taxon>Lactobacillales</taxon>
        <taxon>Streptococcaceae</taxon>
        <taxon>Lactococcus</taxon>
    </lineage>
</organism>
<sequence length="155" mass="17948">MVKNTEDKPLAQNKKARHDYEIYETFEAGIVLTGTEIKSVRQAKIQLKDGFARVRNGEVWLSNVHIAPFEQGNIFNVEELRTRKLLLNKKEIAKIDKELSGTGITFIPLKVYLKNGFAKVLMGLARGKKDYDKRETLKRKEQNRDIARQIKAYNR</sequence>
<comment type="function">
    <text evidence="1">Required for rescue of stalled ribosomes mediated by trans-translation. Binds to transfer-messenger RNA (tmRNA), required for stable association of tmRNA with ribosomes. tmRNA and SmpB together mimic tRNA shape, replacing the anticodon stem-loop with SmpB. tmRNA is encoded by the ssrA gene; the 2 termini fold to resemble tRNA(Ala) and it encodes a 'tag peptide', a short internal open reading frame. During trans-translation Ala-aminoacylated tmRNA acts like a tRNA, entering the A-site of stalled ribosomes, displacing the stalled mRNA. The ribosome then switches to translate the ORF on the tmRNA; the nascent peptide is terminated with the 'tag peptide' encoded by the tmRNA and targeted for degradation. The ribosome is freed to recommence translation, which seems to be the essential function of trans-translation.</text>
</comment>
<comment type="subcellular location">
    <subcellularLocation>
        <location evidence="1">Cytoplasm</location>
    </subcellularLocation>
    <text evidence="1">The tmRNA-SmpB complex associates with stalled 70S ribosomes.</text>
</comment>
<comment type="similarity">
    <text evidence="1">Belongs to the SmpB family.</text>
</comment>
<name>SSRP_LACLA</name>
<keyword id="KW-0963">Cytoplasm</keyword>
<keyword id="KW-1185">Reference proteome</keyword>
<keyword id="KW-0694">RNA-binding</keyword>
<proteinExistence type="inferred from homology"/>